<reference key="1">
    <citation type="journal article" date="2009" name="J. Bacteriol.">
        <title>Complete genome sequence of Haemophilus parasuis SH0165.</title>
        <authorList>
            <person name="Yue M."/>
            <person name="Yang F."/>
            <person name="Yang J."/>
            <person name="Bei W."/>
            <person name="Cai X."/>
            <person name="Chen L."/>
            <person name="Dong J."/>
            <person name="Zhou R."/>
            <person name="Jin M."/>
            <person name="Jin Q."/>
            <person name="Chen H."/>
        </authorList>
    </citation>
    <scope>NUCLEOTIDE SEQUENCE [LARGE SCALE GENOMIC DNA]</scope>
    <source>
        <strain>SH0165</strain>
    </source>
</reference>
<protein>
    <recommendedName>
        <fullName evidence="1">RNA-binding protein Hfq</fullName>
    </recommendedName>
</protein>
<comment type="function">
    <text evidence="1">RNA chaperone that binds small regulatory RNA (sRNAs) and mRNAs to facilitate mRNA translational regulation in response to envelope stress, environmental stress and changes in metabolite concentrations. Also binds with high specificity to tRNAs.</text>
</comment>
<comment type="subunit">
    <text evidence="1">Homohexamer.</text>
</comment>
<comment type="similarity">
    <text evidence="1">Belongs to the Hfq family.</text>
</comment>
<feature type="chain" id="PRO_1000135034" description="RNA-binding protein Hfq">
    <location>
        <begin position="1"/>
        <end position="93"/>
    </location>
</feature>
<feature type="domain" description="Sm" evidence="2">
    <location>
        <begin position="9"/>
        <end position="68"/>
    </location>
</feature>
<feature type="region of interest" description="Disordered" evidence="3">
    <location>
        <begin position="70"/>
        <end position="93"/>
    </location>
</feature>
<feature type="compositionally biased region" description="Low complexity" evidence="3">
    <location>
        <begin position="70"/>
        <end position="81"/>
    </location>
</feature>
<gene>
    <name evidence="1" type="primary">hfq</name>
    <name type="ordered locus">HAPS_1212</name>
</gene>
<keyword id="KW-1185">Reference proteome</keyword>
<keyword id="KW-0694">RNA-binding</keyword>
<keyword id="KW-0346">Stress response</keyword>
<name>HFQ_GLAP5</name>
<organism>
    <name type="scientific">Glaesserella parasuis serovar 5 (strain SH0165)</name>
    <name type="common">Haemophilus parasuis</name>
    <dbReference type="NCBI Taxonomy" id="557723"/>
    <lineage>
        <taxon>Bacteria</taxon>
        <taxon>Pseudomonadati</taxon>
        <taxon>Pseudomonadota</taxon>
        <taxon>Gammaproteobacteria</taxon>
        <taxon>Pasteurellales</taxon>
        <taxon>Pasteurellaceae</taxon>
        <taxon>Glaesserella</taxon>
    </lineage>
</organism>
<accession>B8F663</accession>
<sequence>MAKGQSLQDPYLNALRRERIPVSIYLVNGIKLQGQIESFDQFVILLKNTVSQMVYKHAISTVVPARAISHNNNSNHAHQAAPVQSAEVVEKVE</sequence>
<dbReference type="EMBL" id="CP001321">
    <property type="protein sequence ID" value="ACL32815.1"/>
    <property type="molecule type" value="Genomic_DNA"/>
</dbReference>
<dbReference type="RefSeq" id="WP_005712219.1">
    <property type="nucleotide sequence ID" value="NC_011852.1"/>
</dbReference>
<dbReference type="SMR" id="B8F663"/>
<dbReference type="STRING" id="557723.HAPS_1212"/>
<dbReference type="GeneID" id="66618174"/>
<dbReference type="KEGG" id="hap:HAPS_1212"/>
<dbReference type="HOGENOM" id="CLU_113688_2_2_6"/>
<dbReference type="Proteomes" id="UP000006743">
    <property type="component" value="Chromosome"/>
</dbReference>
<dbReference type="GO" id="GO:0005829">
    <property type="term" value="C:cytosol"/>
    <property type="evidence" value="ECO:0007669"/>
    <property type="project" value="TreeGrafter"/>
</dbReference>
<dbReference type="GO" id="GO:0003723">
    <property type="term" value="F:RNA binding"/>
    <property type="evidence" value="ECO:0007669"/>
    <property type="project" value="UniProtKB-UniRule"/>
</dbReference>
<dbReference type="GO" id="GO:0006355">
    <property type="term" value="P:regulation of DNA-templated transcription"/>
    <property type="evidence" value="ECO:0007669"/>
    <property type="project" value="InterPro"/>
</dbReference>
<dbReference type="GO" id="GO:0043487">
    <property type="term" value="P:regulation of RNA stability"/>
    <property type="evidence" value="ECO:0007669"/>
    <property type="project" value="TreeGrafter"/>
</dbReference>
<dbReference type="GO" id="GO:0045974">
    <property type="term" value="P:regulation of translation, ncRNA-mediated"/>
    <property type="evidence" value="ECO:0007669"/>
    <property type="project" value="TreeGrafter"/>
</dbReference>
<dbReference type="CDD" id="cd01716">
    <property type="entry name" value="Hfq"/>
    <property type="match status" value="1"/>
</dbReference>
<dbReference type="FunFam" id="2.30.30.100:FF:000001">
    <property type="entry name" value="RNA-binding protein Hfq"/>
    <property type="match status" value="1"/>
</dbReference>
<dbReference type="Gene3D" id="2.30.30.100">
    <property type="match status" value="1"/>
</dbReference>
<dbReference type="HAMAP" id="MF_00436">
    <property type="entry name" value="Hfq"/>
    <property type="match status" value="1"/>
</dbReference>
<dbReference type="InterPro" id="IPR005001">
    <property type="entry name" value="Hfq"/>
</dbReference>
<dbReference type="InterPro" id="IPR010920">
    <property type="entry name" value="LSM_dom_sf"/>
</dbReference>
<dbReference type="InterPro" id="IPR047575">
    <property type="entry name" value="Sm"/>
</dbReference>
<dbReference type="NCBIfam" id="TIGR02383">
    <property type="entry name" value="Hfq"/>
    <property type="match status" value="1"/>
</dbReference>
<dbReference type="NCBIfam" id="NF001602">
    <property type="entry name" value="PRK00395.1"/>
    <property type="match status" value="1"/>
</dbReference>
<dbReference type="PANTHER" id="PTHR34772">
    <property type="entry name" value="RNA-BINDING PROTEIN HFQ"/>
    <property type="match status" value="1"/>
</dbReference>
<dbReference type="PANTHER" id="PTHR34772:SF1">
    <property type="entry name" value="RNA-BINDING PROTEIN HFQ"/>
    <property type="match status" value="1"/>
</dbReference>
<dbReference type="Pfam" id="PF17209">
    <property type="entry name" value="Hfq"/>
    <property type="match status" value="1"/>
</dbReference>
<dbReference type="SUPFAM" id="SSF50182">
    <property type="entry name" value="Sm-like ribonucleoproteins"/>
    <property type="match status" value="1"/>
</dbReference>
<dbReference type="PROSITE" id="PS52002">
    <property type="entry name" value="SM"/>
    <property type="match status" value="1"/>
</dbReference>
<proteinExistence type="inferred from homology"/>
<evidence type="ECO:0000255" key="1">
    <source>
        <dbReference type="HAMAP-Rule" id="MF_00436"/>
    </source>
</evidence>
<evidence type="ECO:0000255" key="2">
    <source>
        <dbReference type="PROSITE-ProRule" id="PRU01346"/>
    </source>
</evidence>
<evidence type="ECO:0000256" key="3">
    <source>
        <dbReference type="SAM" id="MobiDB-lite"/>
    </source>
</evidence>